<dbReference type="EC" id="2.3.2.27"/>
<dbReference type="EMBL" id="AC013288">
    <property type="protein sequence ID" value="AAG60080.1"/>
    <property type="molecule type" value="Genomic_DNA"/>
</dbReference>
<dbReference type="EMBL" id="AC079285">
    <property type="protein sequence ID" value="AAG51169.1"/>
    <property type="status" value="ALT_SEQ"/>
    <property type="molecule type" value="Genomic_DNA"/>
</dbReference>
<dbReference type="EMBL" id="CP002684">
    <property type="protein sequence ID" value="AEE34540.1"/>
    <property type="molecule type" value="Genomic_DNA"/>
</dbReference>
<dbReference type="RefSeq" id="NP_849853.1">
    <property type="nucleotide sequence ID" value="NM_179522.2"/>
</dbReference>
<dbReference type="SMR" id="Q9C9M0"/>
<dbReference type="BioGRID" id="28204">
    <property type="interactions" value="4"/>
</dbReference>
<dbReference type="FunCoup" id="Q9C9M0">
    <property type="interactions" value="5"/>
</dbReference>
<dbReference type="IntAct" id="Q9C9M0">
    <property type="interactions" value="1"/>
</dbReference>
<dbReference type="STRING" id="3702.Q9C9M0"/>
<dbReference type="PaxDb" id="3702-AT1G66650.1"/>
<dbReference type="ProteomicsDB" id="234462"/>
<dbReference type="EnsemblPlants" id="AT1G66650.1">
    <property type="protein sequence ID" value="AT1G66650.1"/>
    <property type="gene ID" value="AT1G66650"/>
</dbReference>
<dbReference type="GeneID" id="842983"/>
<dbReference type="Gramene" id="AT1G66650.1">
    <property type="protein sequence ID" value="AT1G66650.1"/>
    <property type="gene ID" value="AT1G66650"/>
</dbReference>
<dbReference type="KEGG" id="ath:AT1G66650"/>
<dbReference type="Araport" id="AT1G66650"/>
<dbReference type="TAIR" id="AT1G66650"/>
<dbReference type="eggNOG" id="KOG3002">
    <property type="taxonomic scope" value="Eukaryota"/>
</dbReference>
<dbReference type="HOGENOM" id="CLU_040603_2_0_1"/>
<dbReference type="InParanoid" id="Q9C9M0"/>
<dbReference type="OMA" id="HEMRQHE"/>
<dbReference type="OrthoDB" id="1001981at2759"/>
<dbReference type="PhylomeDB" id="Q9C9M0"/>
<dbReference type="UniPathway" id="UPA00143"/>
<dbReference type="PRO" id="PR:Q9C9M0"/>
<dbReference type="Proteomes" id="UP000006548">
    <property type="component" value="Chromosome 1"/>
</dbReference>
<dbReference type="ExpressionAtlas" id="Q9C9M0">
    <property type="expression patterns" value="baseline and differential"/>
</dbReference>
<dbReference type="GO" id="GO:0005730">
    <property type="term" value="C:nucleolus"/>
    <property type="evidence" value="ECO:0000314"/>
    <property type="project" value="TAIR"/>
</dbReference>
<dbReference type="GO" id="GO:0032183">
    <property type="term" value="F:SUMO binding"/>
    <property type="evidence" value="ECO:0000353"/>
    <property type="project" value="TAIR"/>
</dbReference>
<dbReference type="GO" id="GO:0016740">
    <property type="term" value="F:transferase activity"/>
    <property type="evidence" value="ECO:0007669"/>
    <property type="project" value="UniProtKB-KW"/>
</dbReference>
<dbReference type="GO" id="GO:0008270">
    <property type="term" value="F:zinc ion binding"/>
    <property type="evidence" value="ECO:0007669"/>
    <property type="project" value="UniProtKB-KW"/>
</dbReference>
<dbReference type="GO" id="GO:0016567">
    <property type="term" value="P:protein ubiquitination"/>
    <property type="evidence" value="ECO:0007669"/>
    <property type="project" value="UniProtKB-UniPathway"/>
</dbReference>
<dbReference type="GO" id="GO:0006511">
    <property type="term" value="P:ubiquitin-dependent protein catabolic process"/>
    <property type="evidence" value="ECO:0000316"/>
    <property type="project" value="TAIR"/>
</dbReference>
<dbReference type="GO" id="GO:0010228">
    <property type="term" value="P:vegetative to reproductive phase transition of meristem"/>
    <property type="evidence" value="ECO:0000315"/>
    <property type="project" value="TAIR"/>
</dbReference>
<dbReference type="CDD" id="cd16571">
    <property type="entry name" value="RING-HC_SIAHs"/>
    <property type="match status" value="1"/>
</dbReference>
<dbReference type="Gene3D" id="3.30.40.10">
    <property type="entry name" value="Zinc/RING finger domain, C3HC4 (zinc finger)"/>
    <property type="match status" value="1"/>
</dbReference>
<dbReference type="InterPro" id="IPR049548">
    <property type="entry name" value="Sina-like_RING"/>
</dbReference>
<dbReference type="InterPro" id="IPR044286">
    <property type="entry name" value="SINL_plant"/>
</dbReference>
<dbReference type="InterPro" id="IPR013083">
    <property type="entry name" value="Znf_RING/FYVE/PHD"/>
</dbReference>
<dbReference type="InterPro" id="IPR013010">
    <property type="entry name" value="Znf_SIAH"/>
</dbReference>
<dbReference type="PANTHER" id="PTHR46632">
    <property type="entry name" value="E3 UBIQUITIN-PROTEIN LIGASE SINA-LIKE 4"/>
    <property type="match status" value="1"/>
</dbReference>
<dbReference type="PANTHER" id="PTHR46632:SF30">
    <property type="entry name" value="E3 UBIQUITIN-PROTEIN LIGASE SINA-LIKE 4"/>
    <property type="match status" value="1"/>
</dbReference>
<dbReference type="Pfam" id="PF21362">
    <property type="entry name" value="Sina_RING"/>
    <property type="match status" value="1"/>
</dbReference>
<dbReference type="Pfam" id="PF21361">
    <property type="entry name" value="Sina_ZnF"/>
    <property type="match status" value="1"/>
</dbReference>
<dbReference type="SUPFAM" id="SSF49599">
    <property type="entry name" value="TRAF domain-like"/>
    <property type="match status" value="1"/>
</dbReference>
<dbReference type="PROSITE" id="PS51081">
    <property type="entry name" value="ZF_SIAH"/>
    <property type="match status" value="1"/>
</dbReference>
<gene>
    <name type="ordered locus">At1g66650</name>
    <name type="ORF">F4N21_21</name>
    <name type="ORF">T12I7.10</name>
</gene>
<evidence type="ECO:0000250" key="1"/>
<evidence type="ECO:0000255" key="2">
    <source>
        <dbReference type="PROSITE-ProRule" id="PRU00455"/>
    </source>
</evidence>
<evidence type="ECO:0000256" key="3">
    <source>
        <dbReference type="SAM" id="MobiDB-lite"/>
    </source>
</evidence>
<evidence type="ECO:0000305" key="4"/>
<comment type="function">
    <text evidence="1">E3 ubiquitin-protein ligase that mediates ubiquitination and subsequent proteasomal degradation of target proteins. E3 ubiquitin ligases accept ubiquitin from an E2 ubiquitin-conjugating enzyme in the form of a thioester and then directly transfers the ubiquitin to targeted substrates. It probably triggers the ubiquitin-mediated degradation of different substrates.</text>
</comment>
<comment type="catalytic activity">
    <reaction>
        <text>S-ubiquitinyl-[E2 ubiquitin-conjugating enzyme]-L-cysteine + [acceptor protein]-L-lysine = [E2 ubiquitin-conjugating enzyme]-L-cysteine + N(6)-ubiquitinyl-[acceptor protein]-L-lysine.</text>
        <dbReference type="EC" id="2.3.2.27"/>
    </reaction>
</comment>
<comment type="pathway">
    <text>Protein modification; protein ubiquitination.</text>
</comment>
<comment type="domain">
    <text evidence="1">The RING-type zinc finger domain is essential for ubiquitin ligase activity.</text>
</comment>
<comment type="domain">
    <text evidence="1">The SBD domain (substrate-binding domain) mediates the homodimerization and the interaction with substrate proteins. It is related to the TRAF family.</text>
</comment>
<comment type="similarity">
    <text evidence="4">Belongs to the SINA (Seven in absentia) family.</text>
</comment>
<comment type="sequence caution" evidence="4">
    <conflict type="erroneous gene model prediction">
        <sequence resource="EMBL-CDS" id="AAG51169"/>
    </conflict>
</comment>
<protein>
    <recommendedName>
        <fullName>E3 ubiquitin-protein ligase SINA-like 4</fullName>
        <ecNumber>2.3.2.27</ecNumber>
    </recommendedName>
    <alternativeName>
        <fullName evidence="4">RING-type E3 ubiquitin transferase SINA-like 4</fullName>
    </alternativeName>
    <alternativeName>
        <fullName>Seven in absentia-like protein 4</fullName>
    </alternativeName>
</protein>
<keyword id="KW-0479">Metal-binding</keyword>
<keyword id="KW-1185">Reference proteome</keyword>
<keyword id="KW-0808">Transferase</keyword>
<keyword id="KW-0833">Ubl conjugation pathway</keyword>
<keyword id="KW-0862">Zinc</keyword>
<keyword id="KW-0863">Zinc-finger</keyword>
<name>SINL4_ARATH</name>
<feature type="chain" id="PRO_0000299193" description="E3 ubiquitin-protein ligase SINA-like 4">
    <location>
        <begin position="1"/>
        <end position="329"/>
    </location>
</feature>
<feature type="zinc finger region" description="RING-type; degenerate">
    <location>
        <begin position="86"/>
        <end position="122"/>
    </location>
</feature>
<feature type="zinc finger region" description="SIAH-type" evidence="2">
    <location>
        <begin position="139"/>
        <end position="198"/>
    </location>
</feature>
<feature type="region of interest" description="Disordered" evidence="3">
    <location>
        <begin position="1"/>
        <end position="58"/>
    </location>
</feature>
<feature type="region of interest" description="SBD" evidence="1">
    <location>
        <begin position="136"/>
        <end position="325"/>
    </location>
</feature>
<feature type="compositionally biased region" description="Basic and acidic residues" evidence="3">
    <location>
        <begin position="1"/>
        <end position="12"/>
    </location>
</feature>
<feature type="compositionally biased region" description="Basic residues" evidence="3">
    <location>
        <begin position="13"/>
        <end position="24"/>
    </location>
</feature>
<feature type="binding site" evidence="1">
    <location>
        <position position="144"/>
    </location>
    <ligand>
        <name>Zn(2+)</name>
        <dbReference type="ChEBI" id="CHEBI:29105"/>
        <label>1</label>
    </ligand>
</feature>
<feature type="binding site" evidence="1">
    <location>
        <position position="151"/>
    </location>
    <ligand>
        <name>Zn(2+)</name>
        <dbReference type="ChEBI" id="CHEBI:29105"/>
        <label>1</label>
    </ligand>
</feature>
<feature type="binding site" evidence="1">
    <location>
        <position position="164"/>
    </location>
    <ligand>
        <name>Zn(2+)</name>
        <dbReference type="ChEBI" id="CHEBI:29105"/>
        <label>1</label>
    </ligand>
</feature>
<feature type="binding site" evidence="1">
    <location>
        <position position="168"/>
    </location>
    <ligand>
        <name>Zn(2+)</name>
        <dbReference type="ChEBI" id="CHEBI:29105"/>
        <label>1</label>
    </ligand>
</feature>
<feature type="binding site" evidence="1">
    <location>
        <position position="175"/>
    </location>
    <ligand>
        <name>Zn(2+)</name>
        <dbReference type="ChEBI" id="CHEBI:29105"/>
        <label>2</label>
    </ligand>
</feature>
<feature type="binding site" evidence="1">
    <location>
        <position position="180"/>
    </location>
    <ligand>
        <name>Zn(2+)</name>
        <dbReference type="ChEBI" id="CHEBI:29105"/>
        <label>2</label>
    </ligand>
</feature>
<feature type="binding site" evidence="1">
    <location>
        <position position="192"/>
    </location>
    <ligand>
        <name>Zn(2+)</name>
        <dbReference type="ChEBI" id="CHEBI:29105"/>
        <label>2</label>
    </ligand>
</feature>
<feature type="binding site" evidence="1">
    <location>
        <position position="197"/>
    </location>
    <ligand>
        <name>Zn(2+)</name>
        <dbReference type="ChEBI" id="CHEBI:29105"/>
        <label>2</label>
    </ligand>
</feature>
<proteinExistence type="evidence at transcript level"/>
<reference key="1">
    <citation type="journal article" date="2000" name="Nature">
        <title>Sequence and analysis of chromosome 1 of the plant Arabidopsis thaliana.</title>
        <authorList>
            <person name="Theologis A."/>
            <person name="Ecker J.R."/>
            <person name="Palm C.J."/>
            <person name="Federspiel N.A."/>
            <person name="Kaul S."/>
            <person name="White O."/>
            <person name="Alonso J."/>
            <person name="Altafi H."/>
            <person name="Araujo R."/>
            <person name="Bowman C.L."/>
            <person name="Brooks S.Y."/>
            <person name="Buehler E."/>
            <person name="Chan A."/>
            <person name="Chao Q."/>
            <person name="Chen H."/>
            <person name="Cheuk R.F."/>
            <person name="Chin C.W."/>
            <person name="Chung M.K."/>
            <person name="Conn L."/>
            <person name="Conway A.B."/>
            <person name="Conway A.R."/>
            <person name="Creasy T.H."/>
            <person name="Dewar K."/>
            <person name="Dunn P."/>
            <person name="Etgu P."/>
            <person name="Feldblyum T.V."/>
            <person name="Feng J.-D."/>
            <person name="Fong B."/>
            <person name="Fujii C.Y."/>
            <person name="Gill J.E."/>
            <person name="Goldsmith A.D."/>
            <person name="Haas B."/>
            <person name="Hansen N.F."/>
            <person name="Hughes B."/>
            <person name="Huizar L."/>
            <person name="Hunter J.L."/>
            <person name="Jenkins J."/>
            <person name="Johnson-Hopson C."/>
            <person name="Khan S."/>
            <person name="Khaykin E."/>
            <person name="Kim C.J."/>
            <person name="Koo H.L."/>
            <person name="Kremenetskaia I."/>
            <person name="Kurtz D.B."/>
            <person name="Kwan A."/>
            <person name="Lam B."/>
            <person name="Langin-Hooper S."/>
            <person name="Lee A."/>
            <person name="Lee J.M."/>
            <person name="Lenz C.A."/>
            <person name="Li J.H."/>
            <person name="Li Y.-P."/>
            <person name="Lin X."/>
            <person name="Liu S.X."/>
            <person name="Liu Z.A."/>
            <person name="Luros J.S."/>
            <person name="Maiti R."/>
            <person name="Marziali A."/>
            <person name="Militscher J."/>
            <person name="Miranda M."/>
            <person name="Nguyen M."/>
            <person name="Nierman W.C."/>
            <person name="Osborne B.I."/>
            <person name="Pai G."/>
            <person name="Peterson J."/>
            <person name="Pham P.K."/>
            <person name="Rizzo M."/>
            <person name="Rooney T."/>
            <person name="Rowley D."/>
            <person name="Sakano H."/>
            <person name="Salzberg S.L."/>
            <person name="Schwartz J.R."/>
            <person name="Shinn P."/>
            <person name="Southwick A.M."/>
            <person name="Sun H."/>
            <person name="Tallon L.J."/>
            <person name="Tambunga G."/>
            <person name="Toriumi M.J."/>
            <person name="Town C.D."/>
            <person name="Utterback T."/>
            <person name="Van Aken S."/>
            <person name="Vaysberg M."/>
            <person name="Vysotskaia V.S."/>
            <person name="Walker M."/>
            <person name="Wu D."/>
            <person name="Yu G."/>
            <person name="Fraser C.M."/>
            <person name="Venter J.C."/>
            <person name="Davis R.W."/>
        </authorList>
    </citation>
    <scope>NUCLEOTIDE SEQUENCE [LARGE SCALE GENOMIC DNA]</scope>
    <source>
        <strain>cv. Columbia</strain>
    </source>
</reference>
<reference key="2">
    <citation type="journal article" date="2017" name="Plant J.">
        <title>Araport11: a complete reannotation of the Arabidopsis thaliana reference genome.</title>
        <authorList>
            <person name="Cheng C.Y."/>
            <person name="Krishnakumar V."/>
            <person name="Chan A.P."/>
            <person name="Thibaud-Nissen F."/>
            <person name="Schobel S."/>
            <person name="Town C.D."/>
        </authorList>
    </citation>
    <scope>GENOME REANNOTATION</scope>
    <source>
        <strain>cv. Columbia</strain>
    </source>
</reference>
<sequence length="329" mass="36938">MTKLGRRNDGGGKSHRSSTKRQRRTSVSVDDPSPGEEEEKTLVVLTDDSDSEEDDKPLGDVLRTCRKRRVSSPKSVTLPNSNVLECPNCFDPLKKPIFQCNNGHLACFLCCIKLKKRCSFCKLPIGDVRCRAMEKVIKAGLVSCSNAIYGCKQSTTYGNQLQSHEKVCVFAPCSCPIKDCNYIGFYKDLINHFRATHKVSPGDINSFVFDRPVIFGLDLDSSDKMVIFVEEKQGNLFVVQGFIGSHGVYATVSHIAPMVPEVRKFSCSLARLRPYSTLRLGLEVKNIQKLRSQEEQPQEDFLLIPSYMVNGDHMKMEISIGDKNDYTHI</sequence>
<organism>
    <name type="scientific">Arabidopsis thaliana</name>
    <name type="common">Mouse-ear cress</name>
    <dbReference type="NCBI Taxonomy" id="3702"/>
    <lineage>
        <taxon>Eukaryota</taxon>
        <taxon>Viridiplantae</taxon>
        <taxon>Streptophyta</taxon>
        <taxon>Embryophyta</taxon>
        <taxon>Tracheophyta</taxon>
        <taxon>Spermatophyta</taxon>
        <taxon>Magnoliopsida</taxon>
        <taxon>eudicotyledons</taxon>
        <taxon>Gunneridae</taxon>
        <taxon>Pentapetalae</taxon>
        <taxon>rosids</taxon>
        <taxon>malvids</taxon>
        <taxon>Brassicales</taxon>
        <taxon>Brassicaceae</taxon>
        <taxon>Camelineae</taxon>
        <taxon>Arabidopsis</taxon>
    </lineage>
</organism>
<accession>Q9C9M0</accession>
<accession>Q9C6H0</accession>